<gene>
    <name evidence="7" type="primary">DJA6</name>
    <name evidence="7" type="synonym">ATJ26</name>
    <name evidence="10" type="ordered locus">At2g22360</name>
</gene>
<dbReference type="EMBL" id="AC006592">
    <property type="protein sequence ID" value="AAD22362.2"/>
    <property type="molecule type" value="Genomic_DNA"/>
</dbReference>
<dbReference type="EMBL" id="CP002685">
    <property type="protein sequence ID" value="AEC07297.1"/>
    <property type="molecule type" value="Genomic_DNA"/>
</dbReference>
<dbReference type="EMBL" id="BT008670">
    <property type="protein sequence ID" value="AAP40480.1"/>
    <property type="molecule type" value="mRNA"/>
</dbReference>
<dbReference type="EMBL" id="AK229509">
    <property type="protein sequence ID" value="BAF01364.1"/>
    <property type="molecule type" value="mRNA"/>
</dbReference>
<dbReference type="EMBL" id="AY084303">
    <property type="protein sequence ID" value="AAM60893.1"/>
    <property type="molecule type" value="mRNA"/>
</dbReference>
<dbReference type="PIR" id="G84611">
    <property type="entry name" value="G84611"/>
</dbReference>
<dbReference type="RefSeq" id="NP_565533.1">
    <property type="nucleotide sequence ID" value="NM_127801.4"/>
</dbReference>
<dbReference type="SMR" id="Q9SJZ7"/>
<dbReference type="FunCoup" id="Q9SJZ7">
    <property type="interactions" value="437"/>
</dbReference>
<dbReference type="STRING" id="3702.Q9SJZ7"/>
<dbReference type="iPTMnet" id="Q9SJZ7"/>
<dbReference type="PaxDb" id="3702-AT2G22360.1"/>
<dbReference type="ProteomicsDB" id="222090"/>
<dbReference type="EnsemblPlants" id="AT2G22360.1">
    <property type="protein sequence ID" value="AT2G22360.1"/>
    <property type="gene ID" value="AT2G22360"/>
</dbReference>
<dbReference type="GeneID" id="816768"/>
<dbReference type="Gramene" id="AT2G22360.1">
    <property type="protein sequence ID" value="AT2G22360.1"/>
    <property type="gene ID" value="AT2G22360"/>
</dbReference>
<dbReference type="KEGG" id="ath:AT2G22360"/>
<dbReference type="Araport" id="AT2G22360"/>
<dbReference type="TAIR" id="AT2G22360">
    <property type="gene designation" value="DJA6"/>
</dbReference>
<dbReference type="eggNOG" id="KOG0715">
    <property type="taxonomic scope" value="Eukaryota"/>
</dbReference>
<dbReference type="HOGENOM" id="CLU_017633_0_1_1"/>
<dbReference type="InParanoid" id="Q9SJZ7"/>
<dbReference type="OMA" id="GMSRNMH"/>
<dbReference type="OrthoDB" id="10256793at2759"/>
<dbReference type="PhylomeDB" id="Q9SJZ7"/>
<dbReference type="PRO" id="PR:Q9SJZ7"/>
<dbReference type="Proteomes" id="UP000006548">
    <property type="component" value="Chromosome 2"/>
</dbReference>
<dbReference type="ExpressionAtlas" id="Q9SJZ7">
    <property type="expression patterns" value="baseline and differential"/>
</dbReference>
<dbReference type="GO" id="GO:0009507">
    <property type="term" value="C:chloroplast"/>
    <property type="evidence" value="ECO:0000314"/>
    <property type="project" value="TAIR"/>
</dbReference>
<dbReference type="GO" id="GO:0009941">
    <property type="term" value="C:chloroplast envelope"/>
    <property type="evidence" value="ECO:0007005"/>
    <property type="project" value="TAIR"/>
</dbReference>
<dbReference type="GO" id="GO:0009535">
    <property type="term" value="C:chloroplast thylakoid membrane"/>
    <property type="evidence" value="ECO:0007005"/>
    <property type="project" value="TAIR"/>
</dbReference>
<dbReference type="GO" id="GO:0005773">
    <property type="term" value="C:vacuole"/>
    <property type="evidence" value="ECO:0007005"/>
    <property type="project" value="TAIR"/>
</dbReference>
<dbReference type="GO" id="GO:0005524">
    <property type="term" value="F:ATP binding"/>
    <property type="evidence" value="ECO:0007669"/>
    <property type="project" value="InterPro"/>
</dbReference>
<dbReference type="GO" id="GO:0031072">
    <property type="term" value="F:heat shock protein binding"/>
    <property type="evidence" value="ECO:0007669"/>
    <property type="project" value="InterPro"/>
</dbReference>
<dbReference type="GO" id="GO:0005506">
    <property type="term" value="F:iron ion binding"/>
    <property type="evidence" value="ECO:0000314"/>
    <property type="project" value="TAIR"/>
</dbReference>
<dbReference type="GO" id="GO:0051082">
    <property type="term" value="F:unfolded protein binding"/>
    <property type="evidence" value="ECO:0007669"/>
    <property type="project" value="InterPro"/>
</dbReference>
<dbReference type="GO" id="GO:0008270">
    <property type="term" value="F:zinc ion binding"/>
    <property type="evidence" value="ECO:0007669"/>
    <property type="project" value="UniProtKB-KW"/>
</dbReference>
<dbReference type="GO" id="GO:0006457">
    <property type="term" value="P:protein folding"/>
    <property type="evidence" value="ECO:0007669"/>
    <property type="project" value="InterPro"/>
</dbReference>
<dbReference type="GO" id="GO:0009408">
    <property type="term" value="P:response to heat"/>
    <property type="evidence" value="ECO:0007669"/>
    <property type="project" value="InterPro"/>
</dbReference>
<dbReference type="CDD" id="cd06257">
    <property type="entry name" value="DnaJ"/>
    <property type="match status" value="1"/>
</dbReference>
<dbReference type="CDD" id="cd10747">
    <property type="entry name" value="DnaJ_C"/>
    <property type="match status" value="1"/>
</dbReference>
<dbReference type="CDD" id="cd10719">
    <property type="entry name" value="DnaJ_zf"/>
    <property type="match status" value="1"/>
</dbReference>
<dbReference type="FunFam" id="2.60.260.20:FF:000005">
    <property type="entry name" value="Chaperone protein dnaJ 1, mitochondrial"/>
    <property type="match status" value="1"/>
</dbReference>
<dbReference type="FunFam" id="1.10.287.110:FF:000037">
    <property type="entry name" value="Chaperone protein dnaJ A6 chloroplastic"/>
    <property type="match status" value="1"/>
</dbReference>
<dbReference type="FunFam" id="2.10.230.10:FF:000002">
    <property type="entry name" value="Molecular chaperone DnaJ"/>
    <property type="match status" value="1"/>
</dbReference>
<dbReference type="FunFam" id="2.60.260.20:FF:000009">
    <property type="entry name" value="Putative Mitochondrial DnaJ chaperone"/>
    <property type="match status" value="1"/>
</dbReference>
<dbReference type="Gene3D" id="1.10.287.110">
    <property type="entry name" value="DnaJ domain"/>
    <property type="match status" value="1"/>
</dbReference>
<dbReference type="Gene3D" id="2.10.230.10">
    <property type="entry name" value="Heat shock protein DnaJ, cysteine-rich domain"/>
    <property type="match status" value="1"/>
</dbReference>
<dbReference type="Gene3D" id="2.60.260.20">
    <property type="entry name" value="Urease metallochaperone UreE, N-terminal domain"/>
    <property type="match status" value="2"/>
</dbReference>
<dbReference type="HAMAP" id="MF_01152">
    <property type="entry name" value="DnaJ"/>
    <property type="match status" value="1"/>
</dbReference>
<dbReference type="InterPro" id="IPR012724">
    <property type="entry name" value="DnaJ"/>
</dbReference>
<dbReference type="InterPro" id="IPR002939">
    <property type="entry name" value="DnaJ_C"/>
</dbReference>
<dbReference type="InterPro" id="IPR001623">
    <property type="entry name" value="DnaJ_domain"/>
</dbReference>
<dbReference type="InterPro" id="IPR018253">
    <property type="entry name" value="DnaJ_domain_CS"/>
</dbReference>
<dbReference type="InterPro" id="IPR008971">
    <property type="entry name" value="HSP40/DnaJ_pept-bd"/>
</dbReference>
<dbReference type="InterPro" id="IPR001305">
    <property type="entry name" value="HSP_DnaJ_Cys-rich_dom"/>
</dbReference>
<dbReference type="InterPro" id="IPR036410">
    <property type="entry name" value="HSP_DnaJ_Cys-rich_dom_sf"/>
</dbReference>
<dbReference type="InterPro" id="IPR036869">
    <property type="entry name" value="J_dom_sf"/>
</dbReference>
<dbReference type="NCBIfam" id="TIGR02349">
    <property type="entry name" value="DnaJ_bact"/>
    <property type="match status" value="1"/>
</dbReference>
<dbReference type="NCBIfam" id="NF008035">
    <property type="entry name" value="PRK10767.1"/>
    <property type="match status" value="1"/>
</dbReference>
<dbReference type="PANTHER" id="PTHR43096:SF10">
    <property type="entry name" value="CHAPERONE PROTEIN DNAJ A6, CHLOROPLASTIC"/>
    <property type="match status" value="1"/>
</dbReference>
<dbReference type="PANTHER" id="PTHR43096">
    <property type="entry name" value="DNAJ HOMOLOG 1, MITOCHONDRIAL-RELATED"/>
    <property type="match status" value="1"/>
</dbReference>
<dbReference type="Pfam" id="PF00226">
    <property type="entry name" value="DnaJ"/>
    <property type="match status" value="1"/>
</dbReference>
<dbReference type="Pfam" id="PF01556">
    <property type="entry name" value="DnaJ_C"/>
    <property type="match status" value="1"/>
</dbReference>
<dbReference type="Pfam" id="PF00684">
    <property type="entry name" value="DnaJ_CXXCXGXG"/>
    <property type="match status" value="1"/>
</dbReference>
<dbReference type="PRINTS" id="PR00625">
    <property type="entry name" value="JDOMAIN"/>
</dbReference>
<dbReference type="SMART" id="SM00271">
    <property type="entry name" value="DnaJ"/>
    <property type="match status" value="1"/>
</dbReference>
<dbReference type="SUPFAM" id="SSF46565">
    <property type="entry name" value="Chaperone J-domain"/>
    <property type="match status" value="1"/>
</dbReference>
<dbReference type="SUPFAM" id="SSF57938">
    <property type="entry name" value="DnaJ/Hsp40 cysteine-rich domain"/>
    <property type="match status" value="1"/>
</dbReference>
<dbReference type="SUPFAM" id="SSF49493">
    <property type="entry name" value="HSP40/DnaJ peptide-binding domain"/>
    <property type="match status" value="2"/>
</dbReference>
<dbReference type="PROSITE" id="PS00636">
    <property type="entry name" value="DNAJ_1"/>
    <property type="match status" value="1"/>
</dbReference>
<dbReference type="PROSITE" id="PS50076">
    <property type="entry name" value="DNAJ_2"/>
    <property type="match status" value="1"/>
</dbReference>
<dbReference type="PROSITE" id="PS51188">
    <property type="entry name" value="ZF_CR"/>
    <property type="match status" value="1"/>
</dbReference>
<reference key="1">
    <citation type="journal article" date="1999" name="Nature">
        <title>Sequence and analysis of chromosome 2 of the plant Arabidopsis thaliana.</title>
        <authorList>
            <person name="Lin X."/>
            <person name="Kaul S."/>
            <person name="Rounsley S.D."/>
            <person name="Shea T.P."/>
            <person name="Benito M.-I."/>
            <person name="Town C.D."/>
            <person name="Fujii C.Y."/>
            <person name="Mason T.M."/>
            <person name="Bowman C.L."/>
            <person name="Barnstead M.E."/>
            <person name="Feldblyum T.V."/>
            <person name="Buell C.R."/>
            <person name="Ketchum K.A."/>
            <person name="Lee J.J."/>
            <person name="Ronning C.M."/>
            <person name="Koo H.L."/>
            <person name="Moffat K.S."/>
            <person name="Cronin L.A."/>
            <person name="Shen M."/>
            <person name="Pai G."/>
            <person name="Van Aken S."/>
            <person name="Umayam L."/>
            <person name="Tallon L.J."/>
            <person name="Gill J.E."/>
            <person name="Adams M.D."/>
            <person name="Carrera A.J."/>
            <person name="Creasy T.H."/>
            <person name="Goodman H.M."/>
            <person name="Somerville C.R."/>
            <person name="Copenhaver G.P."/>
            <person name="Preuss D."/>
            <person name="Nierman W.C."/>
            <person name="White O."/>
            <person name="Eisen J.A."/>
            <person name="Salzberg S.L."/>
            <person name="Fraser C.M."/>
            <person name="Venter J.C."/>
        </authorList>
    </citation>
    <scope>NUCLEOTIDE SEQUENCE [LARGE SCALE GENOMIC DNA]</scope>
    <source>
        <strain>cv. Columbia</strain>
    </source>
</reference>
<reference key="2">
    <citation type="journal article" date="2017" name="Plant J.">
        <title>Araport11: a complete reannotation of the Arabidopsis thaliana reference genome.</title>
        <authorList>
            <person name="Cheng C.Y."/>
            <person name="Krishnakumar V."/>
            <person name="Chan A.P."/>
            <person name="Thibaud-Nissen F."/>
            <person name="Schobel S."/>
            <person name="Town C.D."/>
        </authorList>
    </citation>
    <scope>GENOME REANNOTATION</scope>
    <source>
        <strain>cv. Columbia</strain>
    </source>
</reference>
<reference key="3">
    <citation type="journal article" date="2003" name="Science">
        <title>Empirical analysis of transcriptional activity in the Arabidopsis genome.</title>
        <authorList>
            <person name="Yamada K."/>
            <person name="Lim J."/>
            <person name="Dale J.M."/>
            <person name="Chen H."/>
            <person name="Shinn P."/>
            <person name="Palm C.J."/>
            <person name="Southwick A.M."/>
            <person name="Wu H.C."/>
            <person name="Kim C.J."/>
            <person name="Nguyen M."/>
            <person name="Pham P.K."/>
            <person name="Cheuk R.F."/>
            <person name="Karlin-Newmann G."/>
            <person name="Liu S.X."/>
            <person name="Lam B."/>
            <person name="Sakano H."/>
            <person name="Wu T."/>
            <person name="Yu G."/>
            <person name="Miranda M."/>
            <person name="Quach H.L."/>
            <person name="Tripp M."/>
            <person name="Chang C.H."/>
            <person name="Lee J.M."/>
            <person name="Toriumi M.J."/>
            <person name="Chan M.M."/>
            <person name="Tang C.C."/>
            <person name="Onodera C.S."/>
            <person name="Deng J.M."/>
            <person name="Akiyama K."/>
            <person name="Ansari Y."/>
            <person name="Arakawa T."/>
            <person name="Banh J."/>
            <person name="Banno F."/>
            <person name="Bowser L."/>
            <person name="Brooks S.Y."/>
            <person name="Carninci P."/>
            <person name="Chao Q."/>
            <person name="Choy N."/>
            <person name="Enju A."/>
            <person name="Goldsmith A.D."/>
            <person name="Gurjal M."/>
            <person name="Hansen N.F."/>
            <person name="Hayashizaki Y."/>
            <person name="Johnson-Hopson C."/>
            <person name="Hsuan V.W."/>
            <person name="Iida K."/>
            <person name="Karnes M."/>
            <person name="Khan S."/>
            <person name="Koesema E."/>
            <person name="Ishida J."/>
            <person name="Jiang P.X."/>
            <person name="Jones T."/>
            <person name="Kawai J."/>
            <person name="Kamiya A."/>
            <person name="Meyers C."/>
            <person name="Nakajima M."/>
            <person name="Narusaka M."/>
            <person name="Seki M."/>
            <person name="Sakurai T."/>
            <person name="Satou M."/>
            <person name="Tamse R."/>
            <person name="Vaysberg M."/>
            <person name="Wallender E.K."/>
            <person name="Wong C."/>
            <person name="Yamamura Y."/>
            <person name="Yuan S."/>
            <person name="Shinozaki K."/>
            <person name="Davis R.W."/>
            <person name="Theologis A."/>
            <person name="Ecker J.R."/>
        </authorList>
    </citation>
    <scope>NUCLEOTIDE SEQUENCE [LARGE SCALE MRNA]</scope>
    <source>
        <strain>cv. Columbia</strain>
    </source>
</reference>
<reference key="4">
    <citation type="submission" date="2006-07" db="EMBL/GenBank/DDBJ databases">
        <title>Large-scale analysis of RIKEN Arabidopsis full-length (RAFL) cDNAs.</title>
        <authorList>
            <person name="Totoki Y."/>
            <person name="Seki M."/>
            <person name="Ishida J."/>
            <person name="Nakajima M."/>
            <person name="Enju A."/>
            <person name="Kamiya A."/>
            <person name="Narusaka M."/>
            <person name="Shin-i T."/>
            <person name="Nakagawa M."/>
            <person name="Sakamoto N."/>
            <person name="Oishi K."/>
            <person name="Kohara Y."/>
            <person name="Kobayashi M."/>
            <person name="Toyoda A."/>
            <person name="Sakaki Y."/>
            <person name="Sakurai T."/>
            <person name="Iida K."/>
            <person name="Akiyama K."/>
            <person name="Satou M."/>
            <person name="Toyoda T."/>
            <person name="Konagaya A."/>
            <person name="Carninci P."/>
            <person name="Kawai J."/>
            <person name="Hayashizaki Y."/>
            <person name="Shinozaki K."/>
        </authorList>
    </citation>
    <scope>NUCLEOTIDE SEQUENCE [LARGE SCALE MRNA]</scope>
    <source>
        <strain>cv. Columbia</strain>
    </source>
</reference>
<reference key="5">
    <citation type="submission" date="2002-03" db="EMBL/GenBank/DDBJ databases">
        <title>Full-length cDNA from Arabidopsis thaliana.</title>
        <authorList>
            <person name="Brover V.V."/>
            <person name="Troukhan M.E."/>
            <person name="Alexandrov N.A."/>
            <person name="Lu Y.-P."/>
            <person name="Flavell R.B."/>
            <person name="Feldmann K.A."/>
        </authorList>
    </citation>
    <scope>NUCLEOTIDE SEQUENCE [LARGE SCALE MRNA]</scope>
</reference>
<reference key="6">
    <citation type="journal article" date="2001" name="Cell Stress Chaperones">
        <title>The J-domain proteins of Arabidopsis thaliana: an unexpectedly large and diverse family of chaperones.</title>
        <authorList>
            <person name="Miernyk J.A."/>
        </authorList>
    </citation>
    <scope>GENE FAMILY</scope>
    <scope>NOMENCLATURE</scope>
</reference>
<reference key="7">
    <citation type="journal article" date="2013" name="PLoS ONE">
        <title>Evolution of chloroplast J proteins.</title>
        <authorList>
            <person name="Chiu C.C."/>
            <person name="Chen L.J."/>
            <person name="Su P.H."/>
            <person name="Li H.M."/>
        </authorList>
    </citation>
    <scope>FUNCTION</scope>
    <scope>SUBCELLULAR LOCATION</scope>
    <scope>INDUCTION BY HEAT STRESS</scope>
</reference>
<comment type="function">
    <text evidence="9">May function together with HSC70 chaperone to assist protein folding and prevent protein aggregation during heat stress in the chloroplast.</text>
</comment>
<comment type="subcellular location">
    <subcellularLocation>
        <location evidence="5">Plastid</location>
        <location evidence="5">Chloroplast</location>
    </subcellularLocation>
</comment>
<comment type="induction">
    <text evidence="5">Induced by heat stress.</text>
</comment>
<comment type="similarity">
    <text evidence="8">Belongs to the DnaJ family.</text>
</comment>
<keyword id="KW-0143">Chaperone</keyword>
<keyword id="KW-0150">Chloroplast</keyword>
<keyword id="KW-0479">Metal-binding</keyword>
<keyword id="KW-0934">Plastid</keyword>
<keyword id="KW-1185">Reference proteome</keyword>
<keyword id="KW-0677">Repeat</keyword>
<keyword id="KW-0809">Transit peptide</keyword>
<keyword id="KW-0862">Zinc</keyword>
<keyword id="KW-0863">Zinc-finger</keyword>
<feature type="transit peptide" description="Chloroplast" evidence="2">
    <location>
        <begin position="1"/>
        <end position="82"/>
    </location>
</feature>
<feature type="chain" id="PRO_0000435729" description="Chaperone protein dnaJ A6, chloroplastic" evidence="2">
    <location>
        <begin position="83"/>
        <end position="442"/>
    </location>
</feature>
<feature type="domain" description="J" evidence="3">
    <location>
        <begin position="86"/>
        <end position="150"/>
    </location>
</feature>
<feature type="repeat" description="CXXCXGXG motif" evidence="8">
    <location>
        <begin position="224"/>
        <end position="231"/>
    </location>
</feature>
<feature type="repeat" description="CXXCXGXG motif" evidence="8">
    <location>
        <begin position="241"/>
        <end position="248"/>
    </location>
</feature>
<feature type="repeat" description="CXXCXGXG motif" evidence="8">
    <location>
        <begin position="267"/>
        <end position="274"/>
    </location>
</feature>
<feature type="repeat" description="CXXCXGXG motif" evidence="8">
    <location>
        <begin position="280"/>
        <end position="287"/>
    </location>
</feature>
<feature type="zinc finger region" description="CR-type" evidence="4">
    <location>
        <begin position="211"/>
        <end position="292"/>
    </location>
</feature>
<feature type="binding site" evidence="1">
    <location>
        <position position="224"/>
    </location>
    <ligand>
        <name>Zn(2+)</name>
        <dbReference type="ChEBI" id="CHEBI:29105"/>
        <label>1</label>
    </ligand>
</feature>
<feature type="binding site" evidence="1">
    <location>
        <position position="227"/>
    </location>
    <ligand>
        <name>Zn(2+)</name>
        <dbReference type="ChEBI" id="CHEBI:29105"/>
        <label>1</label>
    </ligand>
</feature>
<feature type="binding site" evidence="1">
    <location>
        <position position="241"/>
    </location>
    <ligand>
        <name>Zn(2+)</name>
        <dbReference type="ChEBI" id="CHEBI:29105"/>
        <label>2</label>
    </ligand>
</feature>
<feature type="binding site" evidence="1">
    <location>
        <position position="244"/>
    </location>
    <ligand>
        <name>Zn(2+)</name>
        <dbReference type="ChEBI" id="CHEBI:29105"/>
        <label>2</label>
    </ligand>
</feature>
<feature type="binding site" evidence="1">
    <location>
        <position position="267"/>
    </location>
    <ligand>
        <name>Zn(2+)</name>
        <dbReference type="ChEBI" id="CHEBI:29105"/>
        <label>2</label>
    </ligand>
</feature>
<feature type="binding site" evidence="1">
    <location>
        <position position="270"/>
    </location>
    <ligand>
        <name>Zn(2+)</name>
        <dbReference type="ChEBI" id="CHEBI:29105"/>
        <label>2</label>
    </ligand>
</feature>
<feature type="binding site" evidence="1">
    <location>
        <position position="280"/>
    </location>
    <ligand>
        <name>Zn(2+)</name>
        <dbReference type="ChEBI" id="CHEBI:29105"/>
        <label>1</label>
    </ligand>
</feature>
<feature type="binding site" evidence="1">
    <location>
        <position position="283"/>
    </location>
    <ligand>
        <name>Zn(2+)</name>
        <dbReference type="ChEBI" id="CHEBI:29105"/>
        <label>1</label>
    </ligand>
</feature>
<feature type="sequence conflict" description="In Ref. 5; AAM60893." evidence="8" ref="5">
    <original>S</original>
    <variation>I</variation>
    <location>
        <position position="307"/>
    </location>
</feature>
<feature type="sequence conflict" description="In Ref. 5; AAM60893." evidence="8" ref="5">
    <original>I</original>
    <variation>V</variation>
    <location>
        <position position="346"/>
    </location>
</feature>
<feature type="sequence conflict" description="In Ref. 3; AAP40480 and 4; BAF01364." evidence="8" ref="3 4">
    <original>K</original>
    <variation>R</variation>
    <location>
        <position position="435"/>
    </location>
</feature>
<accession>Q9SJZ7</accession>
<accession>Q7Y204</accession>
<accession>Q8LGF3</accession>
<sequence length="442" mass="47761">MAIIQLGSTCVAQWSIRPQFAVRAYYPSRIESTRHQNSSSQVNCLGASKSSMFSHGSLPFLSMTGMSRNMHPPRRGSRFTVRADADYYSVLGVSKNATKAEIKSAYRKLARNYHPDVNKDPGAEEKFKEISNAYEVLSDDEKKSLYDRYGEAGLKGAAGFGNGDFSNPFDLFDSLFEGFGGGMGRGSRSRAVDGQDEYYTLILNFKEAVFGMEKEIEISRLESCGTCEGSGAKPGTKPTKCTTCGGQGQVVSAARTPLGVFQQVMTCSSCNGTGEISTPCGTCSGDGRVRKTKRISLKVPAGVDSGSRLRVRGEGNAGKRGGSPGDLFVVIEVIPDPILKRDDTNILYTCKISYIDAILGTTLKVPTVDGTVDLKVPAGTQPSTTLVMAKKGVPVLNKSNMRGDQLVRVQVEIPKRLSKEEKKLIEELADMSKNKTANSTSR</sequence>
<proteinExistence type="evidence at transcript level"/>
<organism>
    <name type="scientific">Arabidopsis thaliana</name>
    <name type="common">Mouse-ear cress</name>
    <dbReference type="NCBI Taxonomy" id="3702"/>
    <lineage>
        <taxon>Eukaryota</taxon>
        <taxon>Viridiplantae</taxon>
        <taxon>Streptophyta</taxon>
        <taxon>Embryophyta</taxon>
        <taxon>Tracheophyta</taxon>
        <taxon>Spermatophyta</taxon>
        <taxon>Magnoliopsida</taxon>
        <taxon>eudicotyledons</taxon>
        <taxon>Gunneridae</taxon>
        <taxon>Pentapetalae</taxon>
        <taxon>rosids</taxon>
        <taxon>malvids</taxon>
        <taxon>Brassicales</taxon>
        <taxon>Brassicaceae</taxon>
        <taxon>Camelineae</taxon>
        <taxon>Arabidopsis</taxon>
    </lineage>
</organism>
<protein>
    <recommendedName>
        <fullName evidence="8">Chaperone protein dnaJ A6, chloroplastic</fullName>
        <shortName evidence="7">atDjA6</shortName>
    </recommendedName>
    <alternativeName>
        <fullName evidence="6">Chaperone protein dnaJ A26</fullName>
        <shortName evidence="6">AtDjA26</shortName>
    </alternativeName>
</protein>
<name>DNJA6_ARATH</name>
<evidence type="ECO:0000250" key="1">
    <source>
        <dbReference type="UniProtKB" id="Q96EY1"/>
    </source>
</evidence>
<evidence type="ECO:0000255" key="2"/>
<evidence type="ECO:0000255" key="3">
    <source>
        <dbReference type="PROSITE-ProRule" id="PRU00286"/>
    </source>
</evidence>
<evidence type="ECO:0000255" key="4">
    <source>
        <dbReference type="PROSITE-ProRule" id="PRU00546"/>
    </source>
</evidence>
<evidence type="ECO:0000269" key="5">
    <source>
    </source>
</evidence>
<evidence type="ECO:0000303" key="6">
    <source>
    </source>
</evidence>
<evidence type="ECO:0000303" key="7">
    <source>
    </source>
</evidence>
<evidence type="ECO:0000305" key="8"/>
<evidence type="ECO:0000305" key="9">
    <source>
    </source>
</evidence>
<evidence type="ECO:0000312" key="10">
    <source>
        <dbReference type="Araport" id="AT2G22360"/>
    </source>
</evidence>